<sequence length="68" mass="7942">MKTKEIRNLSDQDLQKQLEQSKSELFNLRFQLATGQLENPMMIGLVKKDIARIKTIIRERELNIGKEA</sequence>
<dbReference type="EMBL" id="AP008971">
    <property type="protein sequence ID" value="BAG07581.1"/>
    <property type="molecule type" value="Genomic_DNA"/>
</dbReference>
<dbReference type="RefSeq" id="WP_002836118.1">
    <property type="nucleotide sequence ID" value="NC_010376.1"/>
</dbReference>
<dbReference type="SMR" id="B0RZU8"/>
<dbReference type="STRING" id="334413.FMG_0163"/>
<dbReference type="GeneID" id="60839398"/>
<dbReference type="KEGG" id="fma:FMG_0163"/>
<dbReference type="eggNOG" id="COG0255">
    <property type="taxonomic scope" value="Bacteria"/>
</dbReference>
<dbReference type="HOGENOM" id="CLU_158491_5_2_9"/>
<dbReference type="Proteomes" id="UP000001319">
    <property type="component" value="Chromosome"/>
</dbReference>
<dbReference type="GO" id="GO:0022625">
    <property type="term" value="C:cytosolic large ribosomal subunit"/>
    <property type="evidence" value="ECO:0007669"/>
    <property type="project" value="TreeGrafter"/>
</dbReference>
<dbReference type="GO" id="GO:0003735">
    <property type="term" value="F:structural constituent of ribosome"/>
    <property type="evidence" value="ECO:0007669"/>
    <property type="project" value="InterPro"/>
</dbReference>
<dbReference type="GO" id="GO:0006412">
    <property type="term" value="P:translation"/>
    <property type="evidence" value="ECO:0007669"/>
    <property type="project" value="UniProtKB-UniRule"/>
</dbReference>
<dbReference type="CDD" id="cd00427">
    <property type="entry name" value="Ribosomal_L29_HIP"/>
    <property type="match status" value="1"/>
</dbReference>
<dbReference type="FunFam" id="1.10.287.310:FF:000001">
    <property type="entry name" value="50S ribosomal protein L29"/>
    <property type="match status" value="1"/>
</dbReference>
<dbReference type="Gene3D" id="1.10.287.310">
    <property type="match status" value="1"/>
</dbReference>
<dbReference type="HAMAP" id="MF_00374">
    <property type="entry name" value="Ribosomal_uL29"/>
    <property type="match status" value="1"/>
</dbReference>
<dbReference type="InterPro" id="IPR050063">
    <property type="entry name" value="Ribosomal_protein_uL29"/>
</dbReference>
<dbReference type="InterPro" id="IPR001854">
    <property type="entry name" value="Ribosomal_uL29"/>
</dbReference>
<dbReference type="InterPro" id="IPR018254">
    <property type="entry name" value="Ribosomal_uL29_CS"/>
</dbReference>
<dbReference type="InterPro" id="IPR036049">
    <property type="entry name" value="Ribosomal_uL29_sf"/>
</dbReference>
<dbReference type="NCBIfam" id="TIGR00012">
    <property type="entry name" value="L29"/>
    <property type="match status" value="1"/>
</dbReference>
<dbReference type="PANTHER" id="PTHR10916">
    <property type="entry name" value="60S RIBOSOMAL PROTEIN L35/50S RIBOSOMAL PROTEIN L29"/>
    <property type="match status" value="1"/>
</dbReference>
<dbReference type="PANTHER" id="PTHR10916:SF0">
    <property type="entry name" value="LARGE RIBOSOMAL SUBUNIT PROTEIN UL29C"/>
    <property type="match status" value="1"/>
</dbReference>
<dbReference type="Pfam" id="PF00831">
    <property type="entry name" value="Ribosomal_L29"/>
    <property type="match status" value="1"/>
</dbReference>
<dbReference type="SUPFAM" id="SSF46561">
    <property type="entry name" value="Ribosomal protein L29 (L29p)"/>
    <property type="match status" value="1"/>
</dbReference>
<dbReference type="PROSITE" id="PS00579">
    <property type="entry name" value="RIBOSOMAL_L29"/>
    <property type="match status" value="1"/>
</dbReference>
<organism>
    <name type="scientific">Finegoldia magna (strain ATCC 29328 / DSM 20472 / WAL 2508)</name>
    <name type="common">Peptostreptococcus magnus</name>
    <dbReference type="NCBI Taxonomy" id="334413"/>
    <lineage>
        <taxon>Bacteria</taxon>
        <taxon>Bacillati</taxon>
        <taxon>Bacillota</taxon>
        <taxon>Tissierellia</taxon>
        <taxon>Tissierellales</taxon>
        <taxon>Peptoniphilaceae</taxon>
        <taxon>Finegoldia</taxon>
    </lineage>
</organism>
<protein>
    <recommendedName>
        <fullName evidence="1">Large ribosomal subunit protein uL29</fullName>
    </recommendedName>
    <alternativeName>
        <fullName evidence="2">50S ribosomal protein L29</fullName>
    </alternativeName>
</protein>
<feature type="chain" id="PRO_1000121775" description="Large ribosomal subunit protein uL29">
    <location>
        <begin position="1"/>
        <end position="68"/>
    </location>
</feature>
<accession>B0RZU8</accession>
<evidence type="ECO:0000255" key="1">
    <source>
        <dbReference type="HAMAP-Rule" id="MF_00374"/>
    </source>
</evidence>
<evidence type="ECO:0000305" key="2"/>
<reference key="1">
    <citation type="journal article" date="2008" name="DNA Res.">
        <title>Complete genome sequence of Finegoldia magna, an anaerobic opportunistic pathogen.</title>
        <authorList>
            <person name="Goto T."/>
            <person name="Yamashita A."/>
            <person name="Hirakawa H."/>
            <person name="Matsutani M."/>
            <person name="Todo K."/>
            <person name="Ohshima K."/>
            <person name="Toh H."/>
            <person name="Miyamoto K."/>
            <person name="Kuhara S."/>
            <person name="Hattori M."/>
            <person name="Shimizu T."/>
            <person name="Akimoto S."/>
        </authorList>
    </citation>
    <scope>NUCLEOTIDE SEQUENCE [LARGE SCALE GENOMIC DNA]</scope>
    <source>
        <strain>ATCC 29328 / DSM 20472 / WAL 2508</strain>
    </source>
</reference>
<comment type="similarity">
    <text evidence="1">Belongs to the universal ribosomal protein uL29 family.</text>
</comment>
<name>RL29_FINM2</name>
<gene>
    <name evidence="1" type="primary">rpmC</name>
    <name type="ordered locus">FMG_0163</name>
</gene>
<proteinExistence type="inferred from homology"/>
<keyword id="KW-1185">Reference proteome</keyword>
<keyword id="KW-0687">Ribonucleoprotein</keyword>
<keyword id="KW-0689">Ribosomal protein</keyword>